<proteinExistence type="inferred from homology"/>
<dbReference type="EMBL" id="CU928175">
    <property type="protein sequence ID" value="CAR27374.1"/>
    <property type="molecule type" value="Genomic_DNA"/>
</dbReference>
<dbReference type="RefSeq" id="XP_002496307.1">
    <property type="nucleotide sequence ID" value="XM_002496262.1"/>
</dbReference>
<dbReference type="SMR" id="C5DUB3"/>
<dbReference type="FunCoup" id="C5DUB3">
    <property type="interactions" value="36"/>
</dbReference>
<dbReference type="STRING" id="559307.C5DUB3"/>
<dbReference type="GeneID" id="8203535"/>
<dbReference type="KEGG" id="zro:ZYRO0C15378g"/>
<dbReference type="HOGENOM" id="CLU_178727_0_0_1"/>
<dbReference type="InParanoid" id="C5DUB3"/>
<dbReference type="Proteomes" id="UP000008536">
    <property type="component" value="Chromosome C"/>
</dbReference>
<dbReference type="GO" id="GO:0005768">
    <property type="term" value="C:endosome"/>
    <property type="evidence" value="ECO:0007669"/>
    <property type="project" value="UniProtKB-SubCell"/>
</dbReference>
<dbReference type="InterPro" id="IPR028119">
    <property type="entry name" value="Snapin/Pallidin/Snn1"/>
</dbReference>
<dbReference type="Pfam" id="PF14712">
    <property type="entry name" value="Snapin_Pallidin"/>
    <property type="match status" value="1"/>
</dbReference>
<evidence type="ECO:0000250" key="1"/>
<evidence type="ECO:0000255" key="2"/>
<evidence type="ECO:0000305" key="3"/>
<keyword id="KW-0175">Coiled coil</keyword>
<keyword id="KW-0967">Endosome</keyword>
<keyword id="KW-1185">Reference proteome</keyword>
<keyword id="KW-0813">Transport</keyword>
<accession>C5DUB3</accession>
<reference key="1">
    <citation type="journal article" date="2009" name="Genome Res.">
        <title>Comparative genomics of protoploid Saccharomycetaceae.</title>
        <authorList>
            <consortium name="The Genolevures Consortium"/>
            <person name="Souciet J.-L."/>
            <person name="Dujon B."/>
            <person name="Gaillardin C."/>
            <person name="Johnston M."/>
            <person name="Baret P.V."/>
            <person name="Cliften P."/>
            <person name="Sherman D.J."/>
            <person name="Weissenbach J."/>
            <person name="Westhof E."/>
            <person name="Wincker P."/>
            <person name="Jubin C."/>
            <person name="Poulain J."/>
            <person name="Barbe V."/>
            <person name="Segurens B."/>
            <person name="Artiguenave F."/>
            <person name="Anthouard V."/>
            <person name="Vacherie B."/>
            <person name="Val M.-E."/>
            <person name="Fulton R.S."/>
            <person name="Minx P."/>
            <person name="Wilson R."/>
            <person name="Durrens P."/>
            <person name="Jean G."/>
            <person name="Marck C."/>
            <person name="Martin T."/>
            <person name="Nikolski M."/>
            <person name="Rolland T."/>
            <person name="Seret M.-L."/>
            <person name="Casaregola S."/>
            <person name="Despons L."/>
            <person name="Fairhead C."/>
            <person name="Fischer G."/>
            <person name="Lafontaine I."/>
            <person name="Leh V."/>
            <person name="Lemaire M."/>
            <person name="de Montigny J."/>
            <person name="Neuveglise C."/>
            <person name="Thierry A."/>
            <person name="Blanc-Lenfle I."/>
            <person name="Bleykasten C."/>
            <person name="Diffels J."/>
            <person name="Fritsch E."/>
            <person name="Frangeul L."/>
            <person name="Goeffon A."/>
            <person name="Jauniaux N."/>
            <person name="Kachouri-Lafond R."/>
            <person name="Payen C."/>
            <person name="Potier S."/>
            <person name="Pribylova L."/>
            <person name="Ozanne C."/>
            <person name="Richard G.-F."/>
            <person name="Sacerdot C."/>
            <person name="Straub M.-L."/>
            <person name="Talla E."/>
        </authorList>
    </citation>
    <scope>NUCLEOTIDE SEQUENCE [LARGE SCALE GENOMIC DNA]</scope>
    <source>
        <strain>ATCC 2623 / CBS 732 / BCRC 21506 / NBRC 1130 / NCYC 568 / NRRL Y-229</strain>
    </source>
</reference>
<sequence>MQRHESGNTESNVVHPAELIVYSLLSNDLDGIYQSINDLRESQALLILMLRKIKNSLKEETQLLYDKSNWKDDNERLDSLRKRVDSLKSRFQSLKLRSDKLEQRE</sequence>
<feature type="chain" id="PRO_0000410665" description="Biogenesis of lysosome-related organelles complex 1 subunit SNN1">
    <location>
        <begin position="1"/>
        <end position="105"/>
    </location>
</feature>
<feature type="coiled-coil region" evidence="2">
    <location>
        <begin position="70"/>
        <end position="105"/>
    </location>
</feature>
<protein>
    <recommendedName>
        <fullName>Biogenesis of lysosome-related organelles complex 1 subunit SNN1</fullName>
        <shortName>BLOC-1 subunit SNN1</shortName>
    </recommendedName>
    <alternativeName>
        <fullName>SNAPIN-like protein 1</fullName>
    </alternativeName>
</protein>
<name>SNAPN_ZYGRC</name>
<comment type="function">
    <text evidence="1">Component of the biogenesis of lysosome-related organelles complex-1 (BLOC-1), a complex involved in endosomal cargo sorting.</text>
</comment>
<comment type="subunit">
    <text evidence="1">Component of the biogenesis of lysosome-related organelles complex-1 (BLOC-1).</text>
</comment>
<comment type="subcellular location">
    <subcellularLocation>
        <location evidence="1">Endosome</location>
    </subcellularLocation>
</comment>
<comment type="similarity">
    <text evidence="3">Belongs to the SNAPIN family.</text>
</comment>
<organism>
    <name type="scientific">Zygosaccharomyces rouxii (strain ATCC 2623 / CBS 732 / NBRC 1130 / NCYC 568 / NRRL Y-229)</name>
    <dbReference type="NCBI Taxonomy" id="559307"/>
    <lineage>
        <taxon>Eukaryota</taxon>
        <taxon>Fungi</taxon>
        <taxon>Dikarya</taxon>
        <taxon>Ascomycota</taxon>
        <taxon>Saccharomycotina</taxon>
        <taxon>Saccharomycetes</taxon>
        <taxon>Saccharomycetales</taxon>
        <taxon>Saccharomycetaceae</taxon>
        <taxon>Zygosaccharomyces</taxon>
    </lineage>
</organism>
<gene>
    <name type="primary">SNN1</name>
    <name type="ordered locus">ZYRO0C15378g</name>
</gene>